<keyword id="KW-0521">NADP</keyword>
<keyword id="KW-0560">Oxidoreductase</keyword>
<dbReference type="EC" id="1.-.-.-" evidence="5"/>
<dbReference type="EMBL" id="ACJE01000001">
    <property type="protein sequence ID" value="EHA28232.1"/>
    <property type="molecule type" value="Genomic_DNA"/>
</dbReference>
<dbReference type="SMR" id="G3XMB9"/>
<dbReference type="STRING" id="380704.G3XMB9"/>
<dbReference type="VEuPathDB" id="FungiDB:ASPNIDRAFT2_1114648"/>
<dbReference type="HOGENOM" id="CLU_007383_9_2_1"/>
<dbReference type="OrthoDB" id="12474at5052"/>
<dbReference type="Proteomes" id="UP000009038">
    <property type="component" value="Unassembled WGS sequence"/>
</dbReference>
<dbReference type="GO" id="GO:0016616">
    <property type="term" value="F:oxidoreductase activity, acting on the CH-OH group of donors, NAD or NADP as acceptor"/>
    <property type="evidence" value="ECO:0007669"/>
    <property type="project" value="TreeGrafter"/>
</dbReference>
<dbReference type="CDD" id="cd05227">
    <property type="entry name" value="AR_SDR_e"/>
    <property type="match status" value="1"/>
</dbReference>
<dbReference type="FunFam" id="3.40.50.720:FF:000191">
    <property type="entry name" value="Methylglyoxal reductase (NADPH-dependent)"/>
    <property type="match status" value="1"/>
</dbReference>
<dbReference type="Gene3D" id="3.40.50.720">
    <property type="entry name" value="NAD(P)-binding Rossmann-like Domain"/>
    <property type="match status" value="1"/>
</dbReference>
<dbReference type="InterPro" id="IPR001509">
    <property type="entry name" value="Epimerase_deHydtase"/>
</dbReference>
<dbReference type="InterPro" id="IPR036291">
    <property type="entry name" value="NAD(P)-bd_dom_sf"/>
</dbReference>
<dbReference type="InterPro" id="IPR050425">
    <property type="entry name" value="NAD(P)_dehydrat-like"/>
</dbReference>
<dbReference type="PANTHER" id="PTHR10366">
    <property type="entry name" value="NAD DEPENDENT EPIMERASE/DEHYDRATASE"/>
    <property type="match status" value="1"/>
</dbReference>
<dbReference type="PANTHER" id="PTHR10366:SF564">
    <property type="entry name" value="STEROL-4-ALPHA-CARBOXYLATE 3-DEHYDROGENASE, DECARBOXYLATING"/>
    <property type="match status" value="1"/>
</dbReference>
<dbReference type="Pfam" id="PF01370">
    <property type="entry name" value="Epimerase"/>
    <property type="match status" value="1"/>
</dbReference>
<dbReference type="SUPFAM" id="SSF51735">
    <property type="entry name" value="NAD(P)-binding Rossmann-fold domains"/>
    <property type="match status" value="1"/>
</dbReference>
<gene>
    <name evidence="3" type="primary">azaE</name>
    <name type="ORF">ASPNIDRAFT_212676</name>
</gene>
<reference key="1">
    <citation type="journal article" date="2011" name="Genome Res.">
        <title>Comparative genomics of citric-acid-producing Aspergillus niger ATCC 1015 versus enzyme-producing CBS 513.88.</title>
        <authorList>
            <person name="Andersen M.R."/>
            <person name="Salazar M.P."/>
            <person name="Schaap P.J."/>
            <person name="van de Vondervoort P.J.I."/>
            <person name="Culley D."/>
            <person name="Thykaer J."/>
            <person name="Frisvad J.C."/>
            <person name="Nielsen K.F."/>
            <person name="Albang R."/>
            <person name="Albermann K."/>
            <person name="Berka R.M."/>
            <person name="Braus G.H."/>
            <person name="Braus-Stromeyer S.A."/>
            <person name="Corrochano L.M."/>
            <person name="Dai Z."/>
            <person name="van Dijck P.W.M."/>
            <person name="Hofmann G."/>
            <person name="Lasure L.L."/>
            <person name="Magnuson J.K."/>
            <person name="Menke H."/>
            <person name="Meijer M."/>
            <person name="Meijer S.L."/>
            <person name="Nielsen J.B."/>
            <person name="Nielsen M.L."/>
            <person name="van Ooyen A.J.J."/>
            <person name="Pel H.J."/>
            <person name="Poulsen L."/>
            <person name="Samson R.A."/>
            <person name="Stam H."/>
            <person name="Tsang A."/>
            <person name="van den Brink J.M."/>
            <person name="Atkins A."/>
            <person name="Aerts A."/>
            <person name="Shapiro H."/>
            <person name="Pangilinan J."/>
            <person name="Salamov A."/>
            <person name="Lou Y."/>
            <person name="Lindquist E."/>
            <person name="Lucas S."/>
            <person name="Grimwood J."/>
            <person name="Grigoriev I.V."/>
            <person name="Kubicek C.P."/>
            <person name="Martinez D."/>
            <person name="van Peij N.N.M.E."/>
            <person name="Roubos J.A."/>
            <person name="Nielsen J."/>
            <person name="Baker S.E."/>
        </authorList>
    </citation>
    <scope>NUCLEOTIDE SEQUENCE [LARGE SCALE GENOMIC DNA]</scope>
    <source>
        <strain>ATCC 1015 / CBS 113.46 / FGSC A1144 / LSHB Ac4 / NCTC 3858a / NRRL 328 / USDA 3528.7</strain>
    </source>
</reference>
<reference key="2">
    <citation type="journal article" date="2012" name="Chem. Biol.">
        <title>Characterization of a silent azaphilone gene cluster from Aspergillus niger ATCC 1015 reveals a hydroxylation-mediated pyran-ring formation.</title>
        <authorList>
            <person name="Zabala A.O."/>
            <person name="Xu W."/>
            <person name="Chooi Y.H."/>
            <person name="Tang Y."/>
        </authorList>
    </citation>
    <scope>FUNCTION</scope>
    <scope>INDUCTION</scope>
</reference>
<evidence type="ECO:0000250" key="1">
    <source>
        <dbReference type="UniProtKB" id="A0A059TC02"/>
    </source>
</evidence>
<evidence type="ECO:0000269" key="2">
    <source>
    </source>
</evidence>
<evidence type="ECO:0000303" key="3">
    <source>
    </source>
</evidence>
<evidence type="ECO:0000305" key="4"/>
<evidence type="ECO:0000305" key="5">
    <source>
    </source>
</evidence>
<feature type="chain" id="PRO_0000437612" description="Ketoreductase azaE">
    <location>
        <begin position="1"/>
        <end position="338"/>
    </location>
</feature>
<feature type="binding site" evidence="1">
    <location>
        <position position="41"/>
    </location>
    <ligand>
        <name>NADP(+)</name>
        <dbReference type="ChEBI" id="CHEBI:58349"/>
    </ligand>
</feature>
<feature type="binding site" evidence="1">
    <location>
        <position position="166"/>
    </location>
    <ligand>
        <name>NADP(+)</name>
        <dbReference type="ChEBI" id="CHEBI:58349"/>
    </ligand>
</feature>
<organism>
    <name type="scientific">Aspergillus niger (strain ATCC 1015 / CBS 113.46 / FGSC A1144 / LSHB Ac4 / NCTC 3858a / NRRL 328 / USDA 3528.7)</name>
    <dbReference type="NCBI Taxonomy" id="380704"/>
    <lineage>
        <taxon>Eukaryota</taxon>
        <taxon>Fungi</taxon>
        <taxon>Dikarya</taxon>
        <taxon>Ascomycota</taxon>
        <taxon>Pezizomycotina</taxon>
        <taxon>Eurotiomycetes</taxon>
        <taxon>Eurotiomycetidae</taxon>
        <taxon>Eurotiales</taxon>
        <taxon>Aspergillaceae</taxon>
        <taxon>Aspergillus</taxon>
        <taxon>Aspergillus subgen. Circumdati</taxon>
    </lineage>
</organism>
<comment type="function">
    <text evidence="2">Ketoreductase; part of the gene cluster that mediates the biosynthesis of azaphilones, a class of fungal metabolites characterized by a highly oxygenated pyrano-quinone bicyclic core and exhibiting a broad range of bioactivities (PubMed:22921072). In the first step, the non-reducing polyketide synthase azaA forms the hexaketide precursor from successive condensations of five malonyl-CoA units, presumably with a simple acetyl-CoA starter unit (PubMed:22921072). The reactive polyketide chain then undergoes a PT-mediated C2-C7 cyclization to afford the aromatic ring and is eventually released as an aldehyde through the R-domain (PubMed:22921072). The putative ketoreductase azaE is proposed to catalyze the reduction of the terminal ketone resulting in the early culture product FK17-P2a (PubMed:22921072). The monooxygenase azaH was demonstrated to be the only enzyme required to convert FK17-P2a to azanigerone E (PubMed:22921072). AzaH first hydroxylates the benzaldehyde intermediate FK17-P2a at C4, which triggers the formation of the pyran-ring to afford azanigerone E (PubMed:22921072). In parallel, the 2,4-dimethylhexanoyl chain is synthesized by the HR-PKS azaB and is proposed to be transferred to the C4-hydroxyl of azanigerone E by the acyltransferase azaD directly from the ACP domain of azaB (PubMed:22921072). Alternatively, the 2,4-dimethyl-hexanoyl chain may be offloaded from the HR-PKS as a carboxylic acid and converted to an acyl-CoA by azaF (PubMed:22921072). The resulting acyl-CoA molecule could then be taken up as a substrate by AzaD to form azanigerone B (PubMed:22921072). To yield the carboxylic acid substituent in azanigerone A, the hydroxypropyl side chain of azanigerone B would need to undergo a C-C oxidative cleavage catalyzed by cytochrome P450 AzaI (PubMed:22921072). AzaI is proposed to act on a vicinal diol that leads to a C-C bond scission either through an alkoxyradical intermediate or a peroxy complex (PubMed:22921072). In the biosynthesis of azanigerone A, azanigerone B first undergoes hydroxylation at C10, possibly catalyzed by one of the two FAD-dependent monooxygenases encoded in the cluster, azaG or azaL, resulting in the vicinal diol azanigerone C (PubMed:22921072). Oxidative cleavage of azanigerone C by azaI would yield the corresponding aldehyde derivative of azanigerone A (PubMed:22921072). Finally, the dehydrogenase azaJ is proposed to convert the aldehyde functional group into the carboxylic acid, completing the conversion from azanigerone B to azanigerone A (PubMed:22921072). Alternatively, the oxidation of aldehyde to carboxylic acid may be catalyzed by the same P450 enzyme azaI via consecutive oxidation or by endogenous alcohol dehydrogenase (PubMed:22921072).</text>
</comment>
<comment type="pathway">
    <text evidence="2">Secondary metabolite biosynthesis.</text>
</comment>
<comment type="induction">
    <text evidence="2">Expression is under the control of the azaphilone cluster-specific transcription factor azaR (PubMed:22921072).</text>
</comment>
<comment type="similarity">
    <text evidence="4">Belongs to the NAD(P)-dependent epimerase/dehydratase family. Dihydroflavonol-4-reductase subfamily.</text>
</comment>
<protein>
    <recommendedName>
        <fullName evidence="3">Ketoreductase azaE</fullName>
        <ecNumber evidence="5">1.-.-.-</ecNumber>
    </recommendedName>
    <alternativeName>
        <fullName evidence="3">Azaphilone biosynthesis cluster protein azaE</fullName>
    </alternativeName>
</protein>
<sequence length="338" mass="36930">MGSLAKKVLLTGGTGFIASHILTELLDAGYQVVVTVRTHDKGRQLLESLSNTGDKAASYVVVEDIAKDGAYDEAIQSISDLDLVVHTASPYHFNYTDPKTDFLDPAIKGTAGLLASIKAYAPTVKRVVLTSSSATIVTPPNHPEVYDETSYGSVTWEEAMVPQVTYRASKIFAERAAFDFIENDKPNFDLVTINPPLVFGPKPRHVTDLKALNTSNHIIRDTMLGKWKDGGAPIAIPFTWVDVRDVAFAHRQALELPEVSGQRFFTVAGHFSNKRIAEAIRATHPELADRLPPSDVPDDLPEGIYGFDNSKSRKVLGMTFRDLNTCVGDAVTSMLEQA</sequence>
<proteinExistence type="evidence at transcript level"/>
<name>AZAE_ASPNA</name>
<accession>G3XMB9</accession>